<keyword id="KW-0002">3D-structure</keyword>
<keyword id="KW-0496">Mitochondrion</keyword>
<keyword id="KW-1185">Reference proteome</keyword>
<keyword id="KW-0687">Ribonucleoprotein</keyword>
<keyword id="KW-0689">Ribosomal protein</keyword>
<keyword id="KW-0694">RNA-binding</keyword>
<keyword id="KW-0699">rRNA-binding</keyword>
<keyword id="KW-0809">Transit peptide</keyword>
<dbReference type="EMBL" id="AB028620">
    <property type="protein sequence ID" value="BAB02923.1"/>
    <property type="molecule type" value="Genomic_DNA"/>
</dbReference>
<dbReference type="EMBL" id="AB022219">
    <property type="protein sequence ID" value="BAB02923.1"/>
    <property type="status" value="JOINED"/>
    <property type="molecule type" value="Genomic_DNA"/>
</dbReference>
<dbReference type="EMBL" id="CP002686">
    <property type="protein sequence ID" value="AEE75957.1"/>
    <property type="molecule type" value="Genomic_DNA"/>
</dbReference>
<dbReference type="EMBL" id="AF370170">
    <property type="protein sequence ID" value="AAK43985.2"/>
    <property type="molecule type" value="mRNA"/>
</dbReference>
<dbReference type="PDB" id="6XYW">
    <property type="method" value="EM"/>
    <property type="resolution" value="3.86 A"/>
    <property type="chains" value="Ac=1-324"/>
</dbReference>
<dbReference type="PDBsum" id="6XYW"/>
<dbReference type="EMDB" id="EMD-10654"/>
<dbReference type="SMR" id="Q9LRN8"/>
<dbReference type="BioGRID" id="6344">
    <property type="interactions" value="15"/>
</dbReference>
<dbReference type="FunCoup" id="Q9LRN8">
    <property type="interactions" value="4053"/>
</dbReference>
<dbReference type="IntAct" id="Q9LRN8">
    <property type="interactions" value="1"/>
</dbReference>
<dbReference type="STRING" id="3702.Q9LRN8"/>
<dbReference type="PaxDb" id="3702-AT3G17465.1"/>
<dbReference type="ProteomicsDB" id="226470"/>
<dbReference type="EnsemblPlants" id="AT3G17465.1">
    <property type="protein sequence ID" value="AT3G17465.1"/>
    <property type="gene ID" value="AT3G17465"/>
</dbReference>
<dbReference type="Gramene" id="AT3G17465.1">
    <property type="protein sequence ID" value="AT3G17465.1"/>
    <property type="gene ID" value="AT3G17465"/>
</dbReference>
<dbReference type="KEGG" id="ath:AT3G17465"/>
<dbReference type="Araport" id="AT3G17465"/>
<dbReference type="TAIR" id="AT3G17465">
    <property type="gene designation" value="RPL3P"/>
</dbReference>
<dbReference type="eggNOG" id="KOG3141">
    <property type="taxonomic scope" value="Eukaryota"/>
</dbReference>
<dbReference type="HOGENOM" id="CLU_044142_1_0_1"/>
<dbReference type="InParanoid" id="Q9LRN8"/>
<dbReference type="OMA" id="IGIYPMW"/>
<dbReference type="PhylomeDB" id="Q9LRN8"/>
<dbReference type="CD-CODE" id="4299E36E">
    <property type="entry name" value="Nucleolus"/>
</dbReference>
<dbReference type="PRO" id="PR:Q9LRN8"/>
<dbReference type="Proteomes" id="UP000006548">
    <property type="component" value="Chromosome 3"/>
</dbReference>
<dbReference type="ExpressionAtlas" id="Q9LRN8">
    <property type="expression patterns" value="baseline and differential"/>
</dbReference>
<dbReference type="GO" id="GO:0005739">
    <property type="term" value="C:mitochondrion"/>
    <property type="evidence" value="ECO:0007005"/>
    <property type="project" value="TAIR"/>
</dbReference>
<dbReference type="GO" id="GO:1990904">
    <property type="term" value="C:ribonucleoprotein complex"/>
    <property type="evidence" value="ECO:0007669"/>
    <property type="project" value="UniProtKB-KW"/>
</dbReference>
<dbReference type="GO" id="GO:0005840">
    <property type="term" value="C:ribosome"/>
    <property type="evidence" value="ECO:0007669"/>
    <property type="project" value="UniProtKB-KW"/>
</dbReference>
<dbReference type="GO" id="GO:0003729">
    <property type="term" value="F:mRNA binding"/>
    <property type="evidence" value="ECO:0000314"/>
    <property type="project" value="TAIR"/>
</dbReference>
<dbReference type="GO" id="GO:0019843">
    <property type="term" value="F:rRNA binding"/>
    <property type="evidence" value="ECO:0007669"/>
    <property type="project" value="UniProtKB-KW"/>
</dbReference>
<dbReference type="GO" id="GO:0003735">
    <property type="term" value="F:structural constituent of ribosome"/>
    <property type="evidence" value="ECO:0007669"/>
    <property type="project" value="InterPro"/>
</dbReference>
<dbReference type="GO" id="GO:0006412">
    <property type="term" value="P:translation"/>
    <property type="evidence" value="ECO:0007669"/>
    <property type="project" value="InterPro"/>
</dbReference>
<dbReference type="FunFam" id="2.40.30.10:FF:000004">
    <property type="entry name" value="50S ribosomal protein L3"/>
    <property type="match status" value="1"/>
</dbReference>
<dbReference type="FunFam" id="3.30.160.810:FF:000001">
    <property type="entry name" value="50S ribosomal protein L3"/>
    <property type="match status" value="1"/>
</dbReference>
<dbReference type="Gene3D" id="3.30.160.810">
    <property type="match status" value="1"/>
</dbReference>
<dbReference type="Gene3D" id="2.40.30.10">
    <property type="entry name" value="Translation factors"/>
    <property type="match status" value="1"/>
</dbReference>
<dbReference type="HAMAP" id="MF_01325_B">
    <property type="entry name" value="Ribosomal_uL3_B"/>
    <property type="match status" value="1"/>
</dbReference>
<dbReference type="InterPro" id="IPR000597">
    <property type="entry name" value="Ribosomal_uL3"/>
</dbReference>
<dbReference type="InterPro" id="IPR019927">
    <property type="entry name" value="Ribosomal_uL3_bac/org-type"/>
</dbReference>
<dbReference type="InterPro" id="IPR019926">
    <property type="entry name" value="Ribosomal_uL3_CS"/>
</dbReference>
<dbReference type="InterPro" id="IPR009000">
    <property type="entry name" value="Transl_B-barrel_sf"/>
</dbReference>
<dbReference type="NCBIfam" id="TIGR03625">
    <property type="entry name" value="L3_bact"/>
    <property type="match status" value="1"/>
</dbReference>
<dbReference type="PANTHER" id="PTHR11229">
    <property type="entry name" value="50S RIBOSOMAL PROTEIN L3"/>
    <property type="match status" value="1"/>
</dbReference>
<dbReference type="PANTHER" id="PTHR11229:SF8">
    <property type="entry name" value="LARGE RIBOSOMAL SUBUNIT PROTEIN UL3M"/>
    <property type="match status" value="1"/>
</dbReference>
<dbReference type="Pfam" id="PF00297">
    <property type="entry name" value="Ribosomal_L3"/>
    <property type="match status" value="1"/>
</dbReference>
<dbReference type="SUPFAM" id="SSF50447">
    <property type="entry name" value="Translation proteins"/>
    <property type="match status" value="1"/>
</dbReference>
<dbReference type="PROSITE" id="PS00474">
    <property type="entry name" value="RIBOSOMAL_L3"/>
    <property type="match status" value="1"/>
</dbReference>
<feature type="transit peptide" description="Mitochondrion" evidence="2">
    <location>
        <begin position="1"/>
        <end position="41"/>
    </location>
</feature>
<feature type="chain" id="PRO_0000030533" description="Large ribosomal subunit protein uL3m">
    <location>
        <begin position="42"/>
        <end position="324"/>
    </location>
</feature>
<feature type="region of interest" description="Disordered" evidence="3">
    <location>
        <begin position="206"/>
        <end position="229"/>
    </location>
</feature>
<gene>
    <name evidence="5" type="primary">RPL3B</name>
    <name evidence="6" type="ordered locus">At3g17465</name>
    <name evidence="7" type="ORF">MTO12.6</name>
</gene>
<name>RK3B_ARATH</name>
<evidence type="ECO:0000250" key="1"/>
<evidence type="ECO:0000255" key="2"/>
<evidence type="ECO:0000256" key="3">
    <source>
        <dbReference type="SAM" id="MobiDB-lite"/>
    </source>
</evidence>
<evidence type="ECO:0000303" key="4">
    <source>
    </source>
</evidence>
<evidence type="ECO:0000305" key="5"/>
<evidence type="ECO:0000312" key="6">
    <source>
        <dbReference type="Araport" id="AT3G17465"/>
    </source>
</evidence>
<evidence type="ECO:0000312" key="7">
    <source>
        <dbReference type="EMBL" id="BAB02923.1"/>
    </source>
</evidence>
<protein>
    <recommendedName>
        <fullName evidence="4">Large ribosomal subunit protein uL3m</fullName>
    </recommendedName>
    <alternativeName>
        <fullName evidence="5">50S ribosomal protein L3-2, mitochondrial</fullName>
    </alternativeName>
</protein>
<sequence>MAAVPRGLLSRINQFLSIRSITPSSSESLPHCSSFFLIRRFSSDTGLMDGGGSDIIGAQTRIIEAKQGEMSSRSKRTGIIAVKCGMTALWDKWGKRIPISILWVDDNIVSQVKTVEKEGIFALQIGCGQKKPKHLSKAVVGHFRAQGVPLKRKLREFPVTEDALLPVGTSLGVRHFVPGQYVDVTGITRGKGFQGCMKRHGFSGMPASHGASLSHRSGGSTGQRDAPGKVFKGRKMAGRMGADQRTVKNVWVYKIDPARNLMWVRGQVPGAEGNFVFIKDAWCKKPDISKLPFPTYLAPEDEDPSELEPLVADLGEVDPFMLAE</sequence>
<accession>Q9LRN8</accession>
<accession>Q93WN7</accession>
<reference key="1">
    <citation type="journal article" date="2000" name="DNA Res.">
        <title>Structural analysis of Arabidopsis thaliana chromosome 3. I. Sequence features of the regions of 4,504,864 bp covered by sixty P1 and TAC clones.</title>
        <authorList>
            <person name="Sato S."/>
            <person name="Nakamura Y."/>
            <person name="Kaneko T."/>
            <person name="Katoh T."/>
            <person name="Asamizu E."/>
            <person name="Tabata S."/>
        </authorList>
    </citation>
    <scope>NUCLEOTIDE SEQUENCE [LARGE SCALE GENOMIC DNA]</scope>
    <source>
        <strain>cv. Columbia</strain>
    </source>
</reference>
<reference key="2">
    <citation type="journal article" date="2017" name="Plant J.">
        <title>Araport11: a complete reannotation of the Arabidopsis thaliana reference genome.</title>
        <authorList>
            <person name="Cheng C.Y."/>
            <person name="Krishnakumar V."/>
            <person name="Chan A.P."/>
            <person name="Thibaud-Nissen F."/>
            <person name="Schobel S."/>
            <person name="Town C.D."/>
        </authorList>
    </citation>
    <scope>GENOME REANNOTATION</scope>
    <source>
        <strain>cv. Columbia</strain>
    </source>
</reference>
<reference key="3">
    <citation type="journal article" date="2003" name="Science">
        <title>Empirical analysis of transcriptional activity in the Arabidopsis genome.</title>
        <authorList>
            <person name="Yamada K."/>
            <person name="Lim J."/>
            <person name="Dale J.M."/>
            <person name="Chen H."/>
            <person name="Shinn P."/>
            <person name="Palm C.J."/>
            <person name="Southwick A.M."/>
            <person name="Wu H.C."/>
            <person name="Kim C.J."/>
            <person name="Nguyen M."/>
            <person name="Pham P.K."/>
            <person name="Cheuk R.F."/>
            <person name="Karlin-Newmann G."/>
            <person name="Liu S.X."/>
            <person name="Lam B."/>
            <person name="Sakano H."/>
            <person name="Wu T."/>
            <person name="Yu G."/>
            <person name="Miranda M."/>
            <person name="Quach H.L."/>
            <person name="Tripp M."/>
            <person name="Chang C.H."/>
            <person name="Lee J.M."/>
            <person name="Toriumi M.J."/>
            <person name="Chan M.M."/>
            <person name="Tang C.C."/>
            <person name="Onodera C.S."/>
            <person name="Deng J.M."/>
            <person name="Akiyama K."/>
            <person name="Ansari Y."/>
            <person name="Arakawa T."/>
            <person name="Banh J."/>
            <person name="Banno F."/>
            <person name="Bowser L."/>
            <person name="Brooks S.Y."/>
            <person name="Carninci P."/>
            <person name="Chao Q."/>
            <person name="Choy N."/>
            <person name="Enju A."/>
            <person name="Goldsmith A.D."/>
            <person name="Gurjal M."/>
            <person name="Hansen N.F."/>
            <person name="Hayashizaki Y."/>
            <person name="Johnson-Hopson C."/>
            <person name="Hsuan V.W."/>
            <person name="Iida K."/>
            <person name="Karnes M."/>
            <person name="Khan S."/>
            <person name="Koesema E."/>
            <person name="Ishida J."/>
            <person name="Jiang P.X."/>
            <person name="Jones T."/>
            <person name="Kawai J."/>
            <person name="Kamiya A."/>
            <person name="Meyers C."/>
            <person name="Nakajima M."/>
            <person name="Narusaka M."/>
            <person name="Seki M."/>
            <person name="Sakurai T."/>
            <person name="Satou M."/>
            <person name="Tamse R."/>
            <person name="Vaysberg M."/>
            <person name="Wallender E.K."/>
            <person name="Wong C."/>
            <person name="Yamamura Y."/>
            <person name="Yuan S."/>
            <person name="Shinozaki K."/>
            <person name="Davis R.W."/>
            <person name="Theologis A."/>
            <person name="Ecker J.R."/>
        </authorList>
    </citation>
    <scope>NUCLEOTIDE SEQUENCE [LARGE SCALE MRNA] OF 191-324</scope>
    <source>
        <strain>cv. Columbia</strain>
    </source>
</reference>
<reference key="4">
    <citation type="journal article" date="2023" name="Plant Cell">
        <title>An updated nomenclature for plant ribosomal protein genes.</title>
        <authorList>
            <person name="Scarpin M.R."/>
            <person name="Busche M."/>
            <person name="Martinez R.E."/>
            <person name="Harper L.C."/>
            <person name="Reiser L."/>
            <person name="Szakonyi D."/>
            <person name="Merchante C."/>
            <person name="Lan T."/>
            <person name="Xiong W."/>
            <person name="Mo B."/>
            <person name="Tang G."/>
            <person name="Chen X."/>
            <person name="Bailey-Serres J."/>
            <person name="Browning K.S."/>
            <person name="Brunkard J.O."/>
        </authorList>
    </citation>
    <scope>NOMENCLATURE</scope>
</reference>
<organism>
    <name type="scientific">Arabidopsis thaliana</name>
    <name type="common">Mouse-ear cress</name>
    <dbReference type="NCBI Taxonomy" id="3702"/>
    <lineage>
        <taxon>Eukaryota</taxon>
        <taxon>Viridiplantae</taxon>
        <taxon>Streptophyta</taxon>
        <taxon>Embryophyta</taxon>
        <taxon>Tracheophyta</taxon>
        <taxon>Spermatophyta</taxon>
        <taxon>Magnoliopsida</taxon>
        <taxon>eudicotyledons</taxon>
        <taxon>Gunneridae</taxon>
        <taxon>Pentapetalae</taxon>
        <taxon>rosids</taxon>
        <taxon>malvids</taxon>
        <taxon>Brassicales</taxon>
        <taxon>Brassicaceae</taxon>
        <taxon>Camelineae</taxon>
        <taxon>Arabidopsis</taxon>
    </lineage>
</organism>
<proteinExistence type="evidence at protein level"/>
<comment type="function">
    <text evidence="1">One of the primary rRNA binding proteins, it binds directly near the 3'-end of the 23S rRNA, where it nucleates assembly of the 50S subunit.</text>
</comment>
<comment type="subunit">
    <text evidence="1 5">Part of the 50S ribosomal subunit.</text>
</comment>
<comment type="subcellular location">
    <subcellularLocation>
        <location evidence="2 4">Mitochondrion</location>
    </subcellularLocation>
</comment>
<comment type="similarity">
    <text evidence="5">Belongs to the universal ribosomal protein uL3 family.</text>
</comment>